<gene>
    <name evidence="1" type="primary">rplU</name>
    <name type="ordered locus">LBF_1720</name>
</gene>
<comment type="function">
    <text evidence="1">This protein binds to 23S rRNA in the presence of protein L20.</text>
</comment>
<comment type="subunit">
    <text evidence="1">Part of the 50S ribosomal subunit. Contacts protein L20.</text>
</comment>
<comment type="similarity">
    <text evidence="1">Belongs to the bacterial ribosomal protein bL21 family.</text>
</comment>
<dbReference type="EMBL" id="CP000777">
    <property type="protein sequence ID" value="ABZ94227.1"/>
    <property type="molecule type" value="Genomic_DNA"/>
</dbReference>
<dbReference type="RefSeq" id="WP_012388757.1">
    <property type="nucleotide sequence ID" value="NC_010842.1"/>
</dbReference>
<dbReference type="SMR" id="B0S9A0"/>
<dbReference type="GeneID" id="93341205"/>
<dbReference type="KEGG" id="lbf:LBF_1720"/>
<dbReference type="HOGENOM" id="CLU_061463_3_2_12"/>
<dbReference type="GO" id="GO:0005737">
    <property type="term" value="C:cytoplasm"/>
    <property type="evidence" value="ECO:0007669"/>
    <property type="project" value="UniProtKB-ARBA"/>
</dbReference>
<dbReference type="GO" id="GO:1990904">
    <property type="term" value="C:ribonucleoprotein complex"/>
    <property type="evidence" value="ECO:0007669"/>
    <property type="project" value="UniProtKB-KW"/>
</dbReference>
<dbReference type="GO" id="GO:0005840">
    <property type="term" value="C:ribosome"/>
    <property type="evidence" value="ECO:0007669"/>
    <property type="project" value="UniProtKB-KW"/>
</dbReference>
<dbReference type="GO" id="GO:0019843">
    <property type="term" value="F:rRNA binding"/>
    <property type="evidence" value="ECO:0007669"/>
    <property type="project" value="UniProtKB-UniRule"/>
</dbReference>
<dbReference type="GO" id="GO:0003735">
    <property type="term" value="F:structural constituent of ribosome"/>
    <property type="evidence" value="ECO:0007669"/>
    <property type="project" value="InterPro"/>
</dbReference>
<dbReference type="GO" id="GO:0006412">
    <property type="term" value="P:translation"/>
    <property type="evidence" value="ECO:0007669"/>
    <property type="project" value="UniProtKB-UniRule"/>
</dbReference>
<dbReference type="HAMAP" id="MF_01363">
    <property type="entry name" value="Ribosomal_bL21"/>
    <property type="match status" value="1"/>
</dbReference>
<dbReference type="InterPro" id="IPR028909">
    <property type="entry name" value="bL21-like"/>
</dbReference>
<dbReference type="InterPro" id="IPR036164">
    <property type="entry name" value="bL21-like_sf"/>
</dbReference>
<dbReference type="InterPro" id="IPR001787">
    <property type="entry name" value="Ribosomal_bL21"/>
</dbReference>
<dbReference type="NCBIfam" id="TIGR00061">
    <property type="entry name" value="L21"/>
    <property type="match status" value="1"/>
</dbReference>
<dbReference type="PANTHER" id="PTHR21349">
    <property type="entry name" value="50S RIBOSOMAL PROTEIN L21"/>
    <property type="match status" value="1"/>
</dbReference>
<dbReference type="PANTHER" id="PTHR21349:SF0">
    <property type="entry name" value="LARGE RIBOSOMAL SUBUNIT PROTEIN BL21M"/>
    <property type="match status" value="1"/>
</dbReference>
<dbReference type="Pfam" id="PF00829">
    <property type="entry name" value="Ribosomal_L21p"/>
    <property type="match status" value="1"/>
</dbReference>
<dbReference type="SUPFAM" id="SSF141091">
    <property type="entry name" value="L21p-like"/>
    <property type="match status" value="1"/>
</dbReference>
<protein>
    <recommendedName>
        <fullName evidence="1">Large ribosomal subunit protein bL21</fullName>
    </recommendedName>
    <alternativeName>
        <fullName evidence="2">50S ribosomal protein L21</fullName>
    </alternativeName>
</protein>
<sequence>MFAIIELGAKQFKVSPDQVFVAEKTGNTVGSTVETKVLLLSDNNKVNIGSPALSGAKVTLKVLEDCKGEKIHGFKYKKRKNYKKSWGHRQQLQKLQVVSISG</sequence>
<name>RL21_LEPBA</name>
<keyword id="KW-0687">Ribonucleoprotein</keyword>
<keyword id="KW-0689">Ribosomal protein</keyword>
<keyword id="KW-0694">RNA-binding</keyword>
<keyword id="KW-0699">rRNA-binding</keyword>
<accession>B0S9A0</accession>
<proteinExistence type="inferred from homology"/>
<organism>
    <name type="scientific">Leptospira biflexa serovar Patoc (strain Patoc 1 / Ames)</name>
    <dbReference type="NCBI Taxonomy" id="355278"/>
    <lineage>
        <taxon>Bacteria</taxon>
        <taxon>Pseudomonadati</taxon>
        <taxon>Spirochaetota</taxon>
        <taxon>Spirochaetia</taxon>
        <taxon>Leptospirales</taxon>
        <taxon>Leptospiraceae</taxon>
        <taxon>Leptospira</taxon>
    </lineage>
</organism>
<evidence type="ECO:0000255" key="1">
    <source>
        <dbReference type="HAMAP-Rule" id="MF_01363"/>
    </source>
</evidence>
<evidence type="ECO:0000305" key="2"/>
<feature type="chain" id="PRO_1000143815" description="Large ribosomal subunit protein bL21">
    <location>
        <begin position="1"/>
        <end position="102"/>
    </location>
</feature>
<reference key="1">
    <citation type="journal article" date="2008" name="PLoS ONE">
        <title>Genome sequence of the saprophyte Leptospira biflexa provides insights into the evolution of Leptospira and the pathogenesis of leptospirosis.</title>
        <authorList>
            <person name="Picardeau M."/>
            <person name="Bulach D.M."/>
            <person name="Bouchier C."/>
            <person name="Zuerner R.L."/>
            <person name="Zidane N."/>
            <person name="Wilson P.J."/>
            <person name="Creno S."/>
            <person name="Kuczek E.S."/>
            <person name="Bommezzadri S."/>
            <person name="Davis J.C."/>
            <person name="McGrath A."/>
            <person name="Johnson M.J."/>
            <person name="Boursaux-Eude C."/>
            <person name="Seemann T."/>
            <person name="Rouy Z."/>
            <person name="Coppel R.L."/>
            <person name="Rood J.I."/>
            <person name="Lajus A."/>
            <person name="Davies J.K."/>
            <person name="Medigue C."/>
            <person name="Adler B."/>
        </authorList>
    </citation>
    <scope>NUCLEOTIDE SEQUENCE [LARGE SCALE GENOMIC DNA]</scope>
    <source>
        <strain>Patoc 1 / Ames</strain>
    </source>
</reference>